<gene>
    <name type="primary">rplB</name>
    <name type="ordered locus">CRP_153</name>
</gene>
<protein>
    <recommendedName>
        <fullName evidence="3">Large ribosomal subunit protein uL2</fullName>
    </recommendedName>
    <alternativeName>
        <fullName>50S ribosomal protein L2</fullName>
    </alternativeName>
</protein>
<accession>Q05FI7</accession>
<comment type="function">
    <text evidence="1">One of the primary rRNA binding proteins. Required for association of the 30S and 50S subunits to form the 70S ribosome, for tRNA binding and peptide bond formation. It has been suggested to have peptidyltransferase activity; this is somewhat controversial. Makes several contacts with the 16S rRNA in the 70S ribosome (By similarity).</text>
</comment>
<comment type="subunit">
    <text evidence="1">Part of the 50S ribosomal subunit. Forms a bridge to the 30S subunit in the 70S ribosome (By similarity).</text>
</comment>
<comment type="similarity">
    <text evidence="3">Belongs to the universal ribosomal protein uL2 family.</text>
</comment>
<name>RL2_CARRP</name>
<feature type="chain" id="PRO_0000309893" description="Large ribosomal subunit protein uL2">
    <location>
        <begin position="1"/>
        <end position="235"/>
    </location>
</feature>
<feature type="region of interest" description="Disordered" evidence="2">
    <location>
        <begin position="197"/>
        <end position="218"/>
    </location>
</feature>
<reference key="1">
    <citation type="journal article" date="2006" name="Science">
        <title>The 160-kilobase genome of the bacterial endosymbiont Carsonella.</title>
        <authorList>
            <person name="Nakabachi A."/>
            <person name="Yamashita A."/>
            <person name="Toh H."/>
            <person name="Ishikawa H."/>
            <person name="Dunbar H.E."/>
            <person name="Moran N.A."/>
            <person name="Hattori M."/>
        </authorList>
    </citation>
    <scope>NUCLEOTIDE SEQUENCE [LARGE SCALE GENOMIC DNA]</scope>
    <source>
        <strain>PV</strain>
    </source>
</reference>
<proteinExistence type="inferred from homology"/>
<organism>
    <name type="scientific">Carsonella ruddii (strain PV)</name>
    <dbReference type="NCBI Taxonomy" id="387662"/>
    <lineage>
        <taxon>Bacteria</taxon>
        <taxon>Pseudomonadati</taxon>
        <taxon>Pseudomonadota</taxon>
        <taxon>Gammaproteobacteria</taxon>
        <taxon>Oceanospirillales</taxon>
        <taxon>Halomonadaceae</taxon>
        <taxon>Zymobacter group</taxon>
        <taxon>Candidatus Carsonella</taxon>
    </lineage>
</organism>
<evidence type="ECO:0000250" key="1"/>
<evidence type="ECO:0000256" key="2">
    <source>
        <dbReference type="SAM" id="MobiDB-lite"/>
    </source>
</evidence>
<evidence type="ECO:0000305" key="3"/>
<dbReference type="EMBL" id="AP009180">
    <property type="protein sequence ID" value="BAF35184.1"/>
    <property type="molecule type" value="Genomic_DNA"/>
</dbReference>
<dbReference type="RefSeq" id="WP_011672376.1">
    <property type="nucleotide sequence ID" value="NC_008512.1"/>
</dbReference>
<dbReference type="SMR" id="Q05FI7"/>
<dbReference type="STRING" id="387662.CRP_153"/>
<dbReference type="KEGG" id="crp:CRP_153"/>
<dbReference type="HOGENOM" id="CLU_036235_2_1_6"/>
<dbReference type="OrthoDB" id="9778722at2"/>
<dbReference type="Proteomes" id="UP000000777">
    <property type="component" value="Chromosome"/>
</dbReference>
<dbReference type="GO" id="GO:0015934">
    <property type="term" value="C:large ribosomal subunit"/>
    <property type="evidence" value="ECO:0007669"/>
    <property type="project" value="InterPro"/>
</dbReference>
<dbReference type="GO" id="GO:0019843">
    <property type="term" value="F:rRNA binding"/>
    <property type="evidence" value="ECO:0007669"/>
    <property type="project" value="UniProtKB-KW"/>
</dbReference>
<dbReference type="GO" id="GO:0003735">
    <property type="term" value="F:structural constituent of ribosome"/>
    <property type="evidence" value="ECO:0007669"/>
    <property type="project" value="InterPro"/>
</dbReference>
<dbReference type="GO" id="GO:0016740">
    <property type="term" value="F:transferase activity"/>
    <property type="evidence" value="ECO:0007669"/>
    <property type="project" value="InterPro"/>
</dbReference>
<dbReference type="GO" id="GO:0006412">
    <property type="term" value="P:translation"/>
    <property type="evidence" value="ECO:0007669"/>
    <property type="project" value="InterPro"/>
</dbReference>
<dbReference type="FunFam" id="4.10.950.10:FF:000001">
    <property type="entry name" value="50S ribosomal protein L2"/>
    <property type="match status" value="1"/>
</dbReference>
<dbReference type="Gene3D" id="2.30.30.30">
    <property type="match status" value="1"/>
</dbReference>
<dbReference type="Gene3D" id="2.40.50.140">
    <property type="entry name" value="Nucleic acid-binding proteins"/>
    <property type="match status" value="1"/>
</dbReference>
<dbReference type="Gene3D" id="4.10.950.10">
    <property type="entry name" value="Ribosomal protein L2, domain 3"/>
    <property type="match status" value="1"/>
</dbReference>
<dbReference type="InterPro" id="IPR012340">
    <property type="entry name" value="NA-bd_OB-fold"/>
</dbReference>
<dbReference type="InterPro" id="IPR014722">
    <property type="entry name" value="Rib_uL2_dom2"/>
</dbReference>
<dbReference type="InterPro" id="IPR002171">
    <property type="entry name" value="Ribosomal_uL2"/>
</dbReference>
<dbReference type="InterPro" id="IPR005880">
    <property type="entry name" value="Ribosomal_uL2_bac/org-type"/>
</dbReference>
<dbReference type="InterPro" id="IPR022669">
    <property type="entry name" value="Ribosomal_uL2_C"/>
</dbReference>
<dbReference type="InterPro" id="IPR022671">
    <property type="entry name" value="Ribosomal_uL2_CS"/>
</dbReference>
<dbReference type="InterPro" id="IPR014726">
    <property type="entry name" value="Ribosomal_uL2_dom3"/>
</dbReference>
<dbReference type="InterPro" id="IPR022666">
    <property type="entry name" value="Ribosomal_uL2_RNA-bd_dom"/>
</dbReference>
<dbReference type="InterPro" id="IPR008991">
    <property type="entry name" value="Translation_prot_SH3-like_sf"/>
</dbReference>
<dbReference type="NCBIfam" id="TIGR01171">
    <property type="entry name" value="rplB_bact"/>
    <property type="match status" value="1"/>
</dbReference>
<dbReference type="PANTHER" id="PTHR13691:SF5">
    <property type="entry name" value="LARGE RIBOSOMAL SUBUNIT PROTEIN UL2M"/>
    <property type="match status" value="1"/>
</dbReference>
<dbReference type="PANTHER" id="PTHR13691">
    <property type="entry name" value="RIBOSOMAL PROTEIN L2"/>
    <property type="match status" value="1"/>
</dbReference>
<dbReference type="Pfam" id="PF00181">
    <property type="entry name" value="Ribosomal_L2"/>
    <property type="match status" value="1"/>
</dbReference>
<dbReference type="Pfam" id="PF03947">
    <property type="entry name" value="Ribosomal_L2_C"/>
    <property type="match status" value="1"/>
</dbReference>
<dbReference type="PIRSF" id="PIRSF002158">
    <property type="entry name" value="Ribosomal_L2"/>
    <property type="match status" value="1"/>
</dbReference>
<dbReference type="SMART" id="SM01383">
    <property type="entry name" value="Ribosomal_L2"/>
    <property type="match status" value="1"/>
</dbReference>
<dbReference type="SMART" id="SM01382">
    <property type="entry name" value="Ribosomal_L2_C"/>
    <property type="match status" value="1"/>
</dbReference>
<dbReference type="SUPFAM" id="SSF50249">
    <property type="entry name" value="Nucleic acid-binding proteins"/>
    <property type="match status" value="1"/>
</dbReference>
<dbReference type="SUPFAM" id="SSF50104">
    <property type="entry name" value="Translation proteins SH3-like domain"/>
    <property type="match status" value="1"/>
</dbReference>
<dbReference type="PROSITE" id="PS00467">
    <property type="entry name" value="RIBOSOMAL_L2"/>
    <property type="match status" value="1"/>
</dbReference>
<keyword id="KW-0687">Ribonucleoprotein</keyword>
<keyword id="KW-0689">Ribosomal protein</keyword>
<keyword id="KW-0694">RNA-binding</keyword>
<keyword id="KW-0699">rRNA-binding</keyword>
<sequence>MKNKIKSLCLIKKKKSGRSRGKISVRHIGKKHKKFYRKIDFKRDKYNIKGIVESIHYDPNRNARIALIKYLDGEKRYIIKTNNLEISNFVVSSLNKISLNSGNSTIIKNINIGTLINCVEIFPKIGGIFSRSSGSESEIIFKDNKFGVIKLPSGIKKKISLNCMATIGKICTFNVKKKLYKAGQNRWRGIRPTVRGVAMNPVDHPHGGGEGKTSGGRHPCSLWGIKTKGYKTKKK</sequence>